<comment type="function">
    <text evidence="1">Bifunctional enzyme that catalyzes the enolization of 2,3-diketo-5-methylthiopentyl-1-phosphate (DK-MTP-1-P) into the intermediate 2-hydroxy-3-keto-5-methylthiopentenyl-1-phosphate (HK-MTPenyl-1-P), which is then dephosphorylated to form the acireductone 1,2-dihydroxy-3-keto-5-methylthiopentene (DHK-MTPene).</text>
</comment>
<comment type="catalytic activity">
    <reaction evidence="1">
        <text>5-methylsulfanyl-2,3-dioxopentyl phosphate + H2O = 1,2-dihydroxy-5-(methylsulfanyl)pent-1-en-3-one + phosphate</text>
        <dbReference type="Rhea" id="RHEA:21700"/>
        <dbReference type="ChEBI" id="CHEBI:15377"/>
        <dbReference type="ChEBI" id="CHEBI:43474"/>
        <dbReference type="ChEBI" id="CHEBI:49252"/>
        <dbReference type="ChEBI" id="CHEBI:58828"/>
        <dbReference type="EC" id="3.1.3.77"/>
    </reaction>
</comment>
<comment type="cofactor">
    <cofactor evidence="1">
        <name>Mg(2+)</name>
        <dbReference type="ChEBI" id="CHEBI:18420"/>
    </cofactor>
    <text evidence="1">Binds 1 Mg(2+) ion per subunit.</text>
</comment>
<comment type="pathway">
    <text evidence="1">Amino-acid biosynthesis; L-methionine biosynthesis via salvage pathway; L-methionine from S-methyl-5-thio-alpha-D-ribose 1-phosphate: step 3/6.</text>
</comment>
<comment type="pathway">
    <text evidence="1">Amino-acid biosynthesis; L-methionine biosynthesis via salvage pathway; L-methionine from S-methyl-5-thio-alpha-D-ribose 1-phosphate: step 4/6.</text>
</comment>
<comment type="subunit">
    <text evidence="1">Monomer.</text>
</comment>
<comment type="similarity">
    <text evidence="1">Belongs to the HAD-like hydrolase superfamily. MasA/MtnC family.</text>
</comment>
<name>MTNC_PECCP</name>
<protein>
    <recommendedName>
        <fullName evidence="1">Enolase-phosphatase E1</fullName>
        <ecNumber evidence="1">3.1.3.77</ecNumber>
    </recommendedName>
    <alternativeName>
        <fullName evidence="1">2,3-diketo-5-methylthio-1-phosphopentane phosphatase</fullName>
    </alternativeName>
</protein>
<feature type="chain" id="PRO_1000215905" description="Enolase-phosphatase E1">
    <location>
        <begin position="1"/>
        <end position="229"/>
    </location>
</feature>
<organism>
    <name type="scientific">Pectobacterium carotovorum subsp. carotovorum (strain PC1)</name>
    <dbReference type="NCBI Taxonomy" id="561230"/>
    <lineage>
        <taxon>Bacteria</taxon>
        <taxon>Pseudomonadati</taxon>
        <taxon>Pseudomonadota</taxon>
        <taxon>Gammaproteobacteria</taxon>
        <taxon>Enterobacterales</taxon>
        <taxon>Pectobacteriaceae</taxon>
        <taxon>Pectobacterium</taxon>
    </lineage>
</organism>
<sequence length="229" mass="25823">MIKAIVTDIEGTTSDIRFVHSVLFPYARERLADTVRQHGSDPEIAQALDALRQELSQPDADSETLIAALNQFMDEDRKSTALKLLQGIIWRAGYRNGDFQGHLYPEVAAQLAAWQQQGLRLYVYSSGSVEAQQLLFGYSNAGDLRPLFSDYFDTRVGAKRETDSYRTIAQAIGLPAEQLLFLSDIRQELDAAQEAGWHTCQLIRDDADSVSRHRQVARFDQIDLPEYAQ</sequence>
<gene>
    <name evidence="1" type="primary">mtnC</name>
    <name type="ordered locus">PC1_3302</name>
</gene>
<reference key="1">
    <citation type="submission" date="2009-07" db="EMBL/GenBank/DDBJ databases">
        <title>Complete sequence of Pectobacterium carotovorum subsp. carotovorum PC1.</title>
        <authorList>
            <consortium name="US DOE Joint Genome Institute"/>
            <person name="Lucas S."/>
            <person name="Copeland A."/>
            <person name="Lapidus A."/>
            <person name="Glavina del Rio T."/>
            <person name="Tice H."/>
            <person name="Bruce D."/>
            <person name="Goodwin L."/>
            <person name="Pitluck S."/>
            <person name="Munk A.C."/>
            <person name="Brettin T."/>
            <person name="Detter J.C."/>
            <person name="Han C."/>
            <person name="Tapia R."/>
            <person name="Larimer F."/>
            <person name="Land M."/>
            <person name="Hauser L."/>
            <person name="Kyrpides N."/>
            <person name="Mikhailova N."/>
            <person name="Balakrishnan V."/>
            <person name="Glasner J."/>
            <person name="Perna N.T."/>
        </authorList>
    </citation>
    <scope>NUCLEOTIDE SEQUENCE [LARGE SCALE GENOMIC DNA]</scope>
    <source>
        <strain>PC1</strain>
    </source>
</reference>
<keyword id="KW-0028">Amino-acid biosynthesis</keyword>
<keyword id="KW-0378">Hydrolase</keyword>
<keyword id="KW-0460">Magnesium</keyword>
<keyword id="KW-0479">Metal-binding</keyword>
<keyword id="KW-0486">Methionine biosynthesis</keyword>
<evidence type="ECO:0000255" key="1">
    <source>
        <dbReference type="HAMAP-Rule" id="MF_01681"/>
    </source>
</evidence>
<accession>C6DCZ3</accession>
<proteinExistence type="inferred from homology"/>
<dbReference type="EC" id="3.1.3.77" evidence="1"/>
<dbReference type="EMBL" id="CP001657">
    <property type="protein sequence ID" value="ACT14318.1"/>
    <property type="molecule type" value="Genomic_DNA"/>
</dbReference>
<dbReference type="RefSeq" id="WP_015841450.1">
    <property type="nucleotide sequence ID" value="NC_012917.1"/>
</dbReference>
<dbReference type="SMR" id="C6DCZ3"/>
<dbReference type="STRING" id="561230.PC1_3302"/>
<dbReference type="KEGG" id="pct:PC1_3302"/>
<dbReference type="eggNOG" id="COG4229">
    <property type="taxonomic scope" value="Bacteria"/>
</dbReference>
<dbReference type="HOGENOM" id="CLU_023273_0_0_6"/>
<dbReference type="OrthoDB" id="9797416at2"/>
<dbReference type="UniPathway" id="UPA00904">
    <property type="reaction ID" value="UER00876"/>
</dbReference>
<dbReference type="UniPathway" id="UPA00904">
    <property type="reaction ID" value="UER00877"/>
</dbReference>
<dbReference type="Proteomes" id="UP000002736">
    <property type="component" value="Chromosome"/>
</dbReference>
<dbReference type="GO" id="GO:0043715">
    <property type="term" value="F:2,3-diketo-5-methylthiopentyl-1-phosphate enolase activity"/>
    <property type="evidence" value="ECO:0007669"/>
    <property type="project" value="UniProtKB-UniRule"/>
</dbReference>
<dbReference type="GO" id="GO:0043716">
    <property type="term" value="F:2-hydroxy-3-keto-5-methylthiopentenyl-1-phosphate phosphatase activity"/>
    <property type="evidence" value="ECO:0007669"/>
    <property type="project" value="UniProtKB-UniRule"/>
</dbReference>
<dbReference type="GO" id="GO:0043874">
    <property type="term" value="F:acireductone synthase activity"/>
    <property type="evidence" value="ECO:0007669"/>
    <property type="project" value="UniProtKB-EC"/>
</dbReference>
<dbReference type="GO" id="GO:0000287">
    <property type="term" value="F:magnesium ion binding"/>
    <property type="evidence" value="ECO:0007669"/>
    <property type="project" value="UniProtKB-UniRule"/>
</dbReference>
<dbReference type="GO" id="GO:0019509">
    <property type="term" value="P:L-methionine salvage from methylthioadenosine"/>
    <property type="evidence" value="ECO:0007669"/>
    <property type="project" value="UniProtKB-UniRule"/>
</dbReference>
<dbReference type="CDD" id="cd01629">
    <property type="entry name" value="HAD_EP"/>
    <property type="match status" value="1"/>
</dbReference>
<dbReference type="Gene3D" id="1.10.720.60">
    <property type="match status" value="1"/>
</dbReference>
<dbReference type="Gene3D" id="3.40.50.1000">
    <property type="entry name" value="HAD superfamily/HAD-like"/>
    <property type="match status" value="1"/>
</dbReference>
<dbReference type="HAMAP" id="MF_01681">
    <property type="entry name" value="Salvage_MtnC"/>
    <property type="match status" value="1"/>
</dbReference>
<dbReference type="InterPro" id="IPR023943">
    <property type="entry name" value="Enolase-ppase_E1"/>
</dbReference>
<dbReference type="InterPro" id="IPR036412">
    <property type="entry name" value="HAD-like_sf"/>
</dbReference>
<dbReference type="InterPro" id="IPR006439">
    <property type="entry name" value="HAD-SF_hydro_IA"/>
</dbReference>
<dbReference type="InterPro" id="IPR023214">
    <property type="entry name" value="HAD_sf"/>
</dbReference>
<dbReference type="NCBIfam" id="TIGR01691">
    <property type="entry name" value="enolase-ppase"/>
    <property type="match status" value="1"/>
</dbReference>
<dbReference type="NCBIfam" id="TIGR01549">
    <property type="entry name" value="HAD-SF-IA-v1"/>
    <property type="match status" value="1"/>
</dbReference>
<dbReference type="PANTHER" id="PTHR20371">
    <property type="entry name" value="ENOLASE-PHOSPHATASE E1"/>
    <property type="match status" value="1"/>
</dbReference>
<dbReference type="PANTHER" id="PTHR20371:SF1">
    <property type="entry name" value="ENOLASE-PHOSPHATASE E1"/>
    <property type="match status" value="1"/>
</dbReference>
<dbReference type="Pfam" id="PF00702">
    <property type="entry name" value="Hydrolase"/>
    <property type="match status" value="1"/>
</dbReference>
<dbReference type="PRINTS" id="PR00413">
    <property type="entry name" value="HADHALOGNASE"/>
</dbReference>
<dbReference type="SFLD" id="SFLDF00044">
    <property type="entry name" value="enolase-phosphatase"/>
    <property type="match status" value="1"/>
</dbReference>
<dbReference type="SFLD" id="SFLDS00003">
    <property type="entry name" value="Haloacid_Dehalogenase"/>
    <property type="match status" value="1"/>
</dbReference>
<dbReference type="SUPFAM" id="SSF56784">
    <property type="entry name" value="HAD-like"/>
    <property type="match status" value="1"/>
</dbReference>